<keyword id="KW-0472">Membrane</keyword>
<keyword id="KW-0496">Mitochondrion</keyword>
<keyword id="KW-1000">Mitochondrion outer membrane</keyword>
<keyword id="KW-1185">Reference proteome</keyword>
<keyword id="KW-0812">Transmembrane</keyword>
<keyword id="KW-1134">Transmembrane beta strand</keyword>
<gene>
    <name evidence="1" type="primary">MDM10</name>
    <name type="ORF">PAAG_02575</name>
</gene>
<name>MDM10_PARBA</name>
<dbReference type="EMBL" id="KN293996">
    <property type="protein sequence ID" value="EEH40520.2"/>
    <property type="molecule type" value="Genomic_DNA"/>
</dbReference>
<dbReference type="RefSeq" id="XP_015701730.1">
    <property type="nucleotide sequence ID" value="XM_015844682.1"/>
</dbReference>
<dbReference type="SMR" id="C1GVA2"/>
<dbReference type="STRING" id="502779.C1GVA2"/>
<dbReference type="GeneID" id="9098787"/>
<dbReference type="KEGG" id="pbl:PAAG_02575"/>
<dbReference type="VEuPathDB" id="FungiDB:PAAG_02575"/>
<dbReference type="eggNOG" id="ENOG502QUN5">
    <property type="taxonomic scope" value="Eukaryota"/>
</dbReference>
<dbReference type="HOGENOM" id="CLU_026505_1_0_1"/>
<dbReference type="OMA" id="VPGYRQI"/>
<dbReference type="OrthoDB" id="2103793at2759"/>
<dbReference type="Proteomes" id="UP000002059">
    <property type="component" value="Partially assembled WGS sequence"/>
</dbReference>
<dbReference type="GO" id="GO:0032865">
    <property type="term" value="C:ERMES complex"/>
    <property type="evidence" value="ECO:0007669"/>
    <property type="project" value="UniProtKB-UniRule"/>
</dbReference>
<dbReference type="GO" id="GO:0001401">
    <property type="term" value="C:SAM complex"/>
    <property type="evidence" value="ECO:0007669"/>
    <property type="project" value="TreeGrafter"/>
</dbReference>
<dbReference type="GO" id="GO:0051654">
    <property type="term" value="P:establishment of mitochondrion localization"/>
    <property type="evidence" value="ECO:0007669"/>
    <property type="project" value="TreeGrafter"/>
</dbReference>
<dbReference type="GO" id="GO:0000002">
    <property type="term" value="P:mitochondrial genome maintenance"/>
    <property type="evidence" value="ECO:0007669"/>
    <property type="project" value="UniProtKB-UniRule"/>
</dbReference>
<dbReference type="GO" id="GO:0070096">
    <property type="term" value="P:mitochondrial outer membrane translocase complex assembly"/>
    <property type="evidence" value="ECO:0007669"/>
    <property type="project" value="UniProtKB-UniRule"/>
</dbReference>
<dbReference type="GO" id="GO:1990456">
    <property type="term" value="P:mitochondrion-endoplasmic reticulum membrane tethering"/>
    <property type="evidence" value="ECO:0007669"/>
    <property type="project" value="UniProtKB-UniRule"/>
</dbReference>
<dbReference type="GO" id="GO:0015914">
    <property type="term" value="P:phospholipid transport"/>
    <property type="evidence" value="ECO:0007669"/>
    <property type="project" value="TreeGrafter"/>
</dbReference>
<dbReference type="GO" id="GO:0045040">
    <property type="term" value="P:protein insertion into mitochondrial outer membrane"/>
    <property type="evidence" value="ECO:0007669"/>
    <property type="project" value="UniProtKB-UniRule"/>
</dbReference>
<dbReference type="HAMAP" id="MF_03102">
    <property type="entry name" value="Mdm10"/>
    <property type="match status" value="1"/>
</dbReference>
<dbReference type="InterPro" id="IPR027539">
    <property type="entry name" value="Mdm10"/>
</dbReference>
<dbReference type="PANTHER" id="PTHR28035">
    <property type="entry name" value="MITOCHONDRIAL DISTRIBUTION AND MORPHOLOGY PROTEIN 10"/>
    <property type="match status" value="1"/>
</dbReference>
<dbReference type="PANTHER" id="PTHR28035:SF1">
    <property type="entry name" value="MITOCHONDRIAL DISTRIBUTION AND MORPHOLOGY PROTEIN 10"/>
    <property type="match status" value="1"/>
</dbReference>
<dbReference type="Pfam" id="PF12519">
    <property type="entry name" value="MDM10"/>
    <property type="match status" value="1"/>
</dbReference>
<organism>
    <name type="scientific">Paracoccidioides lutzii (strain ATCC MYA-826 / Pb01)</name>
    <name type="common">Paracoccidioides brasiliensis</name>
    <dbReference type="NCBI Taxonomy" id="502779"/>
    <lineage>
        <taxon>Eukaryota</taxon>
        <taxon>Fungi</taxon>
        <taxon>Dikarya</taxon>
        <taxon>Ascomycota</taxon>
        <taxon>Pezizomycotina</taxon>
        <taxon>Eurotiomycetes</taxon>
        <taxon>Eurotiomycetidae</taxon>
        <taxon>Onygenales</taxon>
        <taxon>Ajellomycetaceae</taxon>
        <taxon>Paracoccidioides</taxon>
    </lineage>
</organism>
<accession>C1GVA2</accession>
<comment type="function">
    <text evidence="1">Component of the ERMES/MDM complex, which serves as a molecular tether to connect the endoplasmic reticulum and mitochondria. Components of this complex are involved in the control of mitochondrial shape and protein biogenesis and may function in phospholipid exchange. MDM10 is involved in the late assembly steps of the general translocase of the mitochondrial outer membrane (TOM complex). Functions in the TOM40-specific route of the assembly of outer membrane beta-barrel proteins, including the association of TOM40 with the receptor TOM22 and small TOM proteins. Can associate with the SAM(core) complex as well as the MDM12-MMM1 complex, both involved in late steps of the major beta-barrel assembly pathway, that is responsible for biogenesis of all outer membrane beta-barrel proteins. May act as a switch that shuttles between both complexes and channels precursor proteins into the TOM40-specific pathway. Plays a role in mitochondrial morphology and in the inheritance of mitochondria.</text>
</comment>
<comment type="subunit">
    <text evidence="1">Component of the ER-mitochondria encounter structure (ERMES) or MDM complex, composed of MMM1, MDM10, MDM12 and MDM34. Associates with the mitochondrial outer membrane sorting assembly machinery SAM(core) complex.</text>
</comment>
<comment type="subcellular location">
    <subcellularLocation>
        <location evidence="1">Mitochondrion outer membrane</location>
        <topology evidence="1">Multi-pass membrane protein</topology>
    </subcellularLocation>
    <text evidence="1">The ERMES/MDM complex localizes to a few discrete foci (around 10 per single cell), that represent mitochondria-endoplasmic reticulum junctions. These foci are often found next to mtDNA nucleoids.</text>
</comment>
<comment type="domain">
    <text>Lacks alpha-helical transmembrane segments, suggesting that it resides in the membrane via beta-sheet conformations similar to those predicted for other outer membrane proteins and porin.</text>
</comment>
<comment type="similarity">
    <text evidence="1">Belongs to the MDM10 family.</text>
</comment>
<evidence type="ECO:0000255" key="1">
    <source>
        <dbReference type="HAMAP-Rule" id="MF_03102"/>
    </source>
</evidence>
<sequence length="450" mass="48876">MCDFMDYIQLAFYDASKWNRDNSYSRLTTTANALLDFSTPERLKVNLSSLSTPHFATTYTLGTVGLIDGSISYLFTTIPLHNTPSRSSLIPLRKLVPGYRQIYPPSIPIEYPTANDHSGIPAAVRSKADNPKMKPTLLHATLHLPPPTTLTGLFICRLSSTTQLSLAVCSSRAPASKSAPQATLLTQIFHDTGKYSSEFLFSTDNALLGFKGLWNFGPDPRKPTRGDPASQRSRPLLSLLSAGGEVYYSPVSSVVGLSTGLRFATLPAATENAHSAFPYTLTLTLTPLTGSMSTTYSLLASPNLAFSSRFGFNVYSWESEMVAGCELWRRSKSKSQNIYPSAVDNLAWARLKMGVPDTAVSVNPEHELSYFHKEGHNSSHASDSVIKVRVDQSWNIRALWEGRVKELLISAGVALGPASRSTLSYASPVAPGGLSSYGWKSVGVSVLYAS</sequence>
<proteinExistence type="inferred from homology"/>
<feature type="chain" id="PRO_0000384188" description="Mitochondrial distribution and morphology protein 10">
    <location>
        <begin position="1"/>
        <end position="450"/>
    </location>
</feature>
<protein>
    <recommendedName>
        <fullName evidence="1">Mitochondrial distribution and morphology protein 10</fullName>
    </recommendedName>
    <alternativeName>
        <fullName evidence="1">Mitochondrial inheritance component MDM10</fullName>
    </alternativeName>
</protein>
<reference key="1">
    <citation type="journal article" date="2011" name="PLoS Genet.">
        <title>Comparative genomic analysis of human fungal pathogens causing paracoccidioidomycosis.</title>
        <authorList>
            <person name="Desjardins C.A."/>
            <person name="Champion M.D."/>
            <person name="Holder J.W."/>
            <person name="Muszewska A."/>
            <person name="Goldberg J."/>
            <person name="Bailao A.M."/>
            <person name="Brigido M.M."/>
            <person name="Ferreira M.E."/>
            <person name="Garcia A.M."/>
            <person name="Grynberg M."/>
            <person name="Gujja S."/>
            <person name="Heiman D.I."/>
            <person name="Henn M.R."/>
            <person name="Kodira C.D."/>
            <person name="Leon-Narvaez H."/>
            <person name="Longo L.V.G."/>
            <person name="Ma L.-J."/>
            <person name="Malavazi I."/>
            <person name="Matsuo A.L."/>
            <person name="Morais F.V."/>
            <person name="Pereira M."/>
            <person name="Rodriguez-Brito S."/>
            <person name="Sakthikumar S."/>
            <person name="Salem-Izacc S.M."/>
            <person name="Sykes S.M."/>
            <person name="Teixeira M.M."/>
            <person name="Vallejo M.C."/>
            <person name="Walter M.E."/>
            <person name="Yandava C."/>
            <person name="Young S."/>
            <person name="Zeng Q."/>
            <person name="Zucker J."/>
            <person name="Felipe M.S."/>
            <person name="Goldman G.H."/>
            <person name="Haas B.J."/>
            <person name="McEwen J.G."/>
            <person name="Nino-Vega G."/>
            <person name="Puccia R."/>
            <person name="San-Blas G."/>
            <person name="Soares C.M."/>
            <person name="Birren B.W."/>
            <person name="Cuomo C.A."/>
        </authorList>
    </citation>
    <scope>NUCLEOTIDE SEQUENCE [LARGE SCALE GENOMIC DNA]</scope>
    <source>
        <strain>ATCC MYA-826 / Pb01</strain>
    </source>
</reference>